<reference key="1">
    <citation type="journal article" date="2007" name="Proc. Natl. Acad. Sci. U.S.A.">
        <title>Using plastid genome-scale data to resolve enigmatic relationships among basal angiosperms.</title>
        <authorList>
            <person name="Moore M.J."/>
            <person name="Bell C.D."/>
            <person name="Soltis P.S."/>
            <person name="Soltis D.E."/>
        </authorList>
    </citation>
    <scope>NUCLEOTIDE SEQUENCE [LARGE SCALE GENOMIC DNA]</scope>
</reference>
<accession>A8SE40</accession>
<keyword id="KW-0007">Acetylation</keyword>
<keyword id="KW-0106">Calcium</keyword>
<keyword id="KW-0148">Chlorophyll</keyword>
<keyword id="KW-0150">Chloroplast</keyword>
<keyword id="KW-0157">Chromophore</keyword>
<keyword id="KW-0249">Electron transport</keyword>
<keyword id="KW-0359">Herbicide resistance</keyword>
<keyword id="KW-0408">Iron</keyword>
<keyword id="KW-0460">Magnesium</keyword>
<keyword id="KW-0464">Manganese</keyword>
<keyword id="KW-0472">Membrane</keyword>
<keyword id="KW-0479">Metal-binding</keyword>
<keyword id="KW-0560">Oxidoreductase</keyword>
<keyword id="KW-0597">Phosphoprotein</keyword>
<keyword id="KW-0602">Photosynthesis</keyword>
<keyword id="KW-0604">Photosystem II</keyword>
<keyword id="KW-0934">Plastid</keyword>
<keyword id="KW-0793">Thylakoid</keyword>
<keyword id="KW-0812">Transmembrane</keyword>
<keyword id="KW-1133">Transmembrane helix</keyword>
<keyword id="KW-0813">Transport</keyword>
<dbReference type="EC" id="1.10.3.9" evidence="1"/>
<dbReference type="EMBL" id="EF614270">
    <property type="protein sequence ID" value="ABQ81430.1"/>
    <property type="molecule type" value="Genomic_DNA"/>
</dbReference>
<dbReference type="RefSeq" id="YP_001542427.1">
    <property type="nucleotide sequence ID" value="NC_009962.1"/>
</dbReference>
<dbReference type="SMR" id="A8SE40"/>
<dbReference type="GeneID" id="5729454"/>
<dbReference type="GO" id="GO:0009535">
    <property type="term" value="C:chloroplast thylakoid membrane"/>
    <property type="evidence" value="ECO:0007669"/>
    <property type="project" value="UniProtKB-SubCell"/>
</dbReference>
<dbReference type="GO" id="GO:0009523">
    <property type="term" value="C:photosystem II"/>
    <property type="evidence" value="ECO:0007669"/>
    <property type="project" value="UniProtKB-KW"/>
</dbReference>
<dbReference type="GO" id="GO:0016168">
    <property type="term" value="F:chlorophyll binding"/>
    <property type="evidence" value="ECO:0007669"/>
    <property type="project" value="UniProtKB-UniRule"/>
</dbReference>
<dbReference type="GO" id="GO:0045156">
    <property type="term" value="F:electron transporter, transferring electrons within the cyclic electron transport pathway of photosynthesis activity"/>
    <property type="evidence" value="ECO:0007669"/>
    <property type="project" value="InterPro"/>
</dbReference>
<dbReference type="GO" id="GO:0005506">
    <property type="term" value="F:iron ion binding"/>
    <property type="evidence" value="ECO:0007669"/>
    <property type="project" value="UniProtKB-UniRule"/>
</dbReference>
<dbReference type="GO" id="GO:0016682">
    <property type="term" value="F:oxidoreductase activity, acting on diphenols and related substances as donors, oxygen as acceptor"/>
    <property type="evidence" value="ECO:0007669"/>
    <property type="project" value="UniProtKB-UniRule"/>
</dbReference>
<dbReference type="GO" id="GO:0010242">
    <property type="term" value="F:oxygen evolving activity"/>
    <property type="evidence" value="ECO:0007669"/>
    <property type="project" value="UniProtKB-EC"/>
</dbReference>
<dbReference type="GO" id="GO:0009772">
    <property type="term" value="P:photosynthetic electron transport in photosystem II"/>
    <property type="evidence" value="ECO:0007669"/>
    <property type="project" value="InterPro"/>
</dbReference>
<dbReference type="GO" id="GO:0009635">
    <property type="term" value="P:response to herbicide"/>
    <property type="evidence" value="ECO:0007669"/>
    <property type="project" value="UniProtKB-KW"/>
</dbReference>
<dbReference type="CDD" id="cd09289">
    <property type="entry name" value="Photosystem-II_D1"/>
    <property type="match status" value="1"/>
</dbReference>
<dbReference type="FunFam" id="1.20.85.10:FF:000002">
    <property type="entry name" value="Photosystem II protein D1"/>
    <property type="match status" value="1"/>
</dbReference>
<dbReference type="Gene3D" id="1.20.85.10">
    <property type="entry name" value="Photosystem II protein D1-like"/>
    <property type="match status" value="1"/>
</dbReference>
<dbReference type="HAMAP" id="MF_01379">
    <property type="entry name" value="PSII_PsbA_D1"/>
    <property type="match status" value="1"/>
</dbReference>
<dbReference type="InterPro" id="IPR055266">
    <property type="entry name" value="D1/D2"/>
</dbReference>
<dbReference type="InterPro" id="IPR036854">
    <property type="entry name" value="Photo_II_D1/D2_sf"/>
</dbReference>
<dbReference type="InterPro" id="IPR000484">
    <property type="entry name" value="Photo_RC_L/M"/>
</dbReference>
<dbReference type="InterPro" id="IPR055265">
    <property type="entry name" value="Photo_RC_L/M_CS"/>
</dbReference>
<dbReference type="InterPro" id="IPR005867">
    <property type="entry name" value="PSII_D1"/>
</dbReference>
<dbReference type="NCBIfam" id="TIGR01151">
    <property type="entry name" value="psbA"/>
    <property type="match status" value="1"/>
</dbReference>
<dbReference type="PANTHER" id="PTHR33149:SF12">
    <property type="entry name" value="PHOTOSYSTEM II D2 PROTEIN"/>
    <property type="match status" value="1"/>
</dbReference>
<dbReference type="PANTHER" id="PTHR33149">
    <property type="entry name" value="PHOTOSYSTEM II PROTEIN D1"/>
    <property type="match status" value="1"/>
</dbReference>
<dbReference type="Pfam" id="PF00124">
    <property type="entry name" value="Photo_RC"/>
    <property type="match status" value="1"/>
</dbReference>
<dbReference type="PRINTS" id="PR00256">
    <property type="entry name" value="REACTNCENTRE"/>
</dbReference>
<dbReference type="SUPFAM" id="SSF81483">
    <property type="entry name" value="Bacterial photosystem II reaction centre, L and M subunits"/>
    <property type="match status" value="1"/>
</dbReference>
<dbReference type="PROSITE" id="PS00244">
    <property type="entry name" value="REACTION_CENTER"/>
    <property type="match status" value="1"/>
</dbReference>
<comment type="function">
    <text evidence="1">Photosystem II (PSII) is a light-driven water:plastoquinone oxidoreductase that uses light energy to abstract electrons from H(2)O, generating O(2) and a proton gradient subsequently used for ATP formation. It consists of a core antenna complex that captures photons, and an electron transfer chain that converts photonic excitation into a charge separation. The D1/D2 (PsbA/PsbD) reaction center heterodimer binds P680, the primary electron donor of PSII as well as several subsequent electron acceptors.</text>
</comment>
<comment type="catalytic activity">
    <reaction evidence="1">
        <text>2 a plastoquinone + 4 hnu + 2 H2O = 2 a plastoquinol + O2</text>
        <dbReference type="Rhea" id="RHEA:36359"/>
        <dbReference type="Rhea" id="RHEA-COMP:9561"/>
        <dbReference type="Rhea" id="RHEA-COMP:9562"/>
        <dbReference type="ChEBI" id="CHEBI:15377"/>
        <dbReference type="ChEBI" id="CHEBI:15379"/>
        <dbReference type="ChEBI" id="CHEBI:17757"/>
        <dbReference type="ChEBI" id="CHEBI:30212"/>
        <dbReference type="ChEBI" id="CHEBI:62192"/>
        <dbReference type="EC" id="1.10.3.9"/>
    </reaction>
</comment>
<comment type="cofactor">
    <text evidence="1">The D1/D2 heterodimer binds P680, chlorophylls that are the primary electron donor of PSII, and subsequent electron acceptors. It shares a non-heme iron and each subunit binds pheophytin, quinone, additional chlorophylls, carotenoids and lipids. D1 provides most of the ligands for the Mn4-Ca-O5 cluster of the oxygen-evolving complex (OEC). There is also a Cl(-1) ion associated with D1 and D2, which is required for oxygen evolution. The PSII complex binds additional chlorophylls, carotenoids and specific lipids.</text>
</comment>
<comment type="subunit">
    <text evidence="1">PSII is composed of 1 copy each of membrane proteins PsbA, PsbB, PsbC, PsbD, PsbE, PsbF, PsbH, PsbI, PsbJ, PsbK, PsbL, PsbM, PsbT, PsbX, PsbY, PsbZ, Psb30/Ycf12, at least 3 peripheral proteins of the oxygen-evolving complex and a large number of cofactors. It forms dimeric complexes.</text>
</comment>
<comment type="subcellular location">
    <subcellularLocation>
        <location evidence="1">Plastid</location>
        <location evidence="1">Chloroplast thylakoid membrane</location>
        <topology evidence="1">Multi-pass membrane protein</topology>
    </subcellularLocation>
</comment>
<comment type="PTM">
    <text evidence="1">Tyr-161 forms a radical intermediate that is referred to as redox-active TyrZ, YZ or Y-Z.</text>
</comment>
<comment type="PTM">
    <text evidence="1">C-terminally processed by CTPA; processing is essential to allow assembly of the oxygen-evolving complex and thus photosynthetic growth.</text>
</comment>
<comment type="miscellaneous">
    <text evidence="1">2 of the reaction center chlorophylls (ChlD1 and ChlD2) are entirely coordinated by water.</text>
</comment>
<comment type="miscellaneous">
    <text evidence="1">Herbicides such as atrazine, BNT, diuron or ioxynil bind in the Q(B) binding site and block subsequent electron transfer.</text>
</comment>
<comment type="similarity">
    <text evidence="1">Belongs to the reaction center PufL/M/PsbA/D family.</text>
</comment>
<organism>
    <name type="scientific">Ceratophyllum demersum</name>
    <name type="common">Rigid hornwort</name>
    <name type="synonym">Coontail</name>
    <dbReference type="NCBI Taxonomy" id="4428"/>
    <lineage>
        <taxon>Eukaryota</taxon>
        <taxon>Viridiplantae</taxon>
        <taxon>Streptophyta</taxon>
        <taxon>Embryophyta</taxon>
        <taxon>Tracheophyta</taxon>
        <taxon>Spermatophyta</taxon>
        <taxon>Magnoliopsida</taxon>
        <taxon>Ceratophyllales</taxon>
        <taxon>Ceratophyllaceae</taxon>
        <taxon>Ceratophyllum</taxon>
    </lineage>
</organism>
<gene>
    <name evidence="1" type="primary">psbA</name>
</gene>
<protein>
    <recommendedName>
        <fullName evidence="1">Photosystem II protein D1</fullName>
        <shortName evidence="1">PSII D1 protein</shortName>
        <ecNumber evidence="1">1.10.3.9</ecNumber>
    </recommendedName>
    <alternativeName>
        <fullName evidence="1">Photosystem II Q(B) protein</fullName>
    </alternativeName>
</protein>
<sequence length="353" mass="38878">MTAILERRESASLWGRFCNWITSTENRLYIGWFGVLMIPTLLTATSVFIIAFIAAPPVDIDGIREPVSGSLLYGNNIISGAIIPTSAAIGLHFYPIWEAASVDEWLYNGGPYELIVLHFLLGVACYMGREWELSFRLGMRPWIAVAYSAPVAAATAVFLIYPIGQGSFSDGMPLGISGTFNFMIVFQAEHNILMHPFHMLGVAGVFGGSLFSAMHGSLVTSSLIRETTENESANEGYRFGQEEETYNIVAAHGYFGRLIFQYASFNNSRSLHFFLAAWPVVGIWFTALGISTMAFNLNGFNFNQSVVDSQGRVINTWADIINRANLGMEVMHERNAHNFPLDLAAVEAPSTNG</sequence>
<proteinExistence type="inferred from homology"/>
<name>PSBA_CERDE</name>
<geneLocation type="chloroplast"/>
<evidence type="ECO:0000255" key="1">
    <source>
        <dbReference type="HAMAP-Rule" id="MF_01379"/>
    </source>
</evidence>
<feature type="initiator methionine" description="Removed" evidence="1">
    <location>
        <position position="1"/>
    </location>
</feature>
<feature type="chain" id="PRO_0000339962" description="Photosystem II protein D1" evidence="1">
    <location>
        <begin position="2"/>
        <end position="344"/>
    </location>
</feature>
<feature type="propeptide" id="PRO_0000339963" evidence="1">
    <location>
        <begin position="345"/>
        <end position="353"/>
    </location>
</feature>
<feature type="transmembrane region" description="Helical" evidence="1">
    <location>
        <begin position="29"/>
        <end position="46"/>
    </location>
</feature>
<feature type="transmembrane region" description="Helical" evidence="1">
    <location>
        <begin position="118"/>
        <end position="133"/>
    </location>
</feature>
<feature type="transmembrane region" description="Helical" evidence="1">
    <location>
        <begin position="142"/>
        <end position="156"/>
    </location>
</feature>
<feature type="transmembrane region" description="Helical" evidence="1">
    <location>
        <begin position="197"/>
        <end position="218"/>
    </location>
</feature>
<feature type="transmembrane region" description="Helical" evidence="1">
    <location>
        <begin position="274"/>
        <end position="288"/>
    </location>
</feature>
<feature type="binding site" description="axial binding residue" evidence="1">
    <location>
        <position position="118"/>
    </location>
    <ligand>
        <name>chlorophyll a</name>
        <dbReference type="ChEBI" id="CHEBI:58416"/>
        <label>ChlzD1</label>
    </ligand>
    <ligandPart>
        <name>Mg</name>
        <dbReference type="ChEBI" id="CHEBI:25107"/>
    </ligandPart>
</feature>
<feature type="binding site" evidence="1">
    <location>
        <position position="126"/>
    </location>
    <ligand>
        <name>pheophytin a</name>
        <dbReference type="ChEBI" id="CHEBI:136840"/>
        <label>D1</label>
    </ligand>
</feature>
<feature type="binding site" evidence="1">
    <location>
        <position position="170"/>
    </location>
    <ligand>
        <name>[CaMn4O5] cluster</name>
        <dbReference type="ChEBI" id="CHEBI:189552"/>
    </ligand>
</feature>
<feature type="binding site" evidence="1">
    <location>
        <position position="189"/>
    </location>
    <ligand>
        <name>[CaMn4O5] cluster</name>
        <dbReference type="ChEBI" id="CHEBI:189552"/>
    </ligand>
</feature>
<feature type="binding site" description="axial binding residue" evidence="1">
    <location>
        <position position="198"/>
    </location>
    <ligand>
        <name>chlorophyll a</name>
        <dbReference type="ChEBI" id="CHEBI:58416"/>
        <label>PD1</label>
    </ligand>
    <ligandPart>
        <name>Mg</name>
        <dbReference type="ChEBI" id="CHEBI:25107"/>
    </ligandPart>
</feature>
<feature type="binding site" evidence="1">
    <location>
        <position position="215"/>
    </location>
    <ligand>
        <name>a quinone</name>
        <dbReference type="ChEBI" id="CHEBI:132124"/>
        <label>B</label>
    </ligand>
</feature>
<feature type="binding site" evidence="1">
    <location>
        <position position="215"/>
    </location>
    <ligand>
        <name>Fe cation</name>
        <dbReference type="ChEBI" id="CHEBI:24875"/>
        <note>ligand shared with heterodimeric partner</note>
    </ligand>
</feature>
<feature type="binding site" evidence="1">
    <location>
        <begin position="264"/>
        <end position="265"/>
    </location>
    <ligand>
        <name>a quinone</name>
        <dbReference type="ChEBI" id="CHEBI:132124"/>
        <label>B</label>
    </ligand>
</feature>
<feature type="binding site" evidence="1">
    <location>
        <position position="272"/>
    </location>
    <ligand>
        <name>Fe cation</name>
        <dbReference type="ChEBI" id="CHEBI:24875"/>
        <note>ligand shared with heterodimeric partner</note>
    </ligand>
</feature>
<feature type="binding site" evidence="1">
    <location>
        <position position="332"/>
    </location>
    <ligand>
        <name>[CaMn4O5] cluster</name>
        <dbReference type="ChEBI" id="CHEBI:189552"/>
    </ligand>
</feature>
<feature type="binding site" evidence="1">
    <location>
        <position position="333"/>
    </location>
    <ligand>
        <name>[CaMn4O5] cluster</name>
        <dbReference type="ChEBI" id="CHEBI:189552"/>
    </ligand>
</feature>
<feature type="binding site" evidence="1">
    <location>
        <position position="342"/>
    </location>
    <ligand>
        <name>[CaMn4O5] cluster</name>
        <dbReference type="ChEBI" id="CHEBI:189552"/>
    </ligand>
</feature>
<feature type="binding site" evidence="1">
    <location>
        <position position="344"/>
    </location>
    <ligand>
        <name>[CaMn4O5] cluster</name>
        <dbReference type="ChEBI" id="CHEBI:189552"/>
    </ligand>
</feature>
<feature type="site" description="Tyrosine radical intermediate" evidence="1">
    <location>
        <position position="161"/>
    </location>
</feature>
<feature type="site" description="Stabilizes free radical intermediate" evidence="1">
    <location>
        <position position="190"/>
    </location>
</feature>
<feature type="site" description="Cleavage; by CTPA" evidence="1">
    <location>
        <begin position="344"/>
        <end position="345"/>
    </location>
</feature>
<feature type="modified residue" description="N-acetylthreonine" evidence="1">
    <location>
        <position position="2"/>
    </location>
</feature>
<feature type="modified residue" description="Phosphothreonine" evidence="1">
    <location>
        <position position="2"/>
    </location>
</feature>